<sequence>MPEYEGNCLCKAIHLKAIIEEPKLSCCHCETCRIWCSSPFMAFSCTQKPSVSENENVGKYASSSFAERIFCKNCGTTLYFAYTNGKNPYFINAWLFKGIENITFDAQVCIDDKPDCYDFANKTSMFTVDEVMKSIVK</sequence>
<dbReference type="EC" id="4.-.-.-"/>
<dbReference type="EMBL" id="CU329670">
    <property type="protein sequence ID" value="CAB16257.1"/>
    <property type="molecule type" value="Genomic_DNA"/>
</dbReference>
<dbReference type="PIR" id="T38500">
    <property type="entry name" value="T38500"/>
</dbReference>
<dbReference type="RefSeq" id="NP_594990.1">
    <property type="nucleotide sequence ID" value="NM_001020421.2"/>
</dbReference>
<dbReference type="SMR" id="O14034"/>
<dbReference type="BioGRID" id="279159">
    <property type="interactions" value="10"/>
</dbReference>
<dbReference type="PaxDb" id="4896-SPAC29B12.13.1"/>
<dbReference type="EnsemblFungi" id="SPAC29B12.13.1">
    <property type="protein sequence ID" value="SPAC29B12.13.1:pep"/>
    <property type="gene ID" value="SPAC29B12.13"/>
</dbReference>
<dbReference type="KEGG" id="spo:2542706"/>
<dbReference type="PomBase" id="SPAC29B12.13"/>
<dbReference type="VEuPathDB" id="FungiDB:SPAC29B12.13"/>
<dbReference type="eggNOG" id="ENOG502S8F2">
    <property type="taxonomic scope" value="Eukaryota"/>
</dbReference>
<dbReference type="HOGENOM" id="CLU_055491_4_1_1"/>
<dbReference type="InParanoid" id="O14034"/>
<dbReference type="OMA" id="YQSSEWA"/>
<dbReference type="PhylomeDB" id="O14034"/>
<dbReference type="PRO" id="PR:O14034"/>
<dbReference type="Proteomes" id="UP000002485">
    <property type="component" value="Chromosome I"/>
</dbReference>
<dbReference type="GO" id="GO:0005829">
    <property type="term" value="C:cytosol"/>
    <property type="evidence" value="ECO:0007005"/>
    <property type="project" value="PomBase"/>
</dbReference>
<dbReference type="GO" id="GO:0005634">
    <property type="term" value="C:nucleus"/>
    <property type="evidence" value="ECO:0007005"/>
    <property type="project" value="PomBase"/>
</dbReference>
<dbReference type="GO" id="GO:0046872">
    <property type="term" value="F:metal ion binding"/>
    <property type="evidence" value="ECO:0007669"/>
    <property type="project" value="UniProtKB-KW"/>
</dbReference>
<dbReference type="GO" id="GO:0051907">
    <property type="term" value="F:S-(hydroxymethyl)glutathione synthase activity"/>
    <property type="evidence" value="ECO:0000255"/>
    <property type="project" value="PomBase"/>
</dbReference>
<dbReference type="GO" id="GO:0046294">
    <property type="term" value="P:formaldehyde catabolic process"/>
    <property type="evidence" value="ECO:0000255"/>
    <property type="project" value="PomBase"/>
</dbReference>
<dbReference type="Gene3D" id="3.90.1590.10">
    <property type="entry name" value="glutathione-dependent formaldehyde- activating enzyme (gfa)"/>
    <property type="match status" value="1"/>
</dbReference>
<dbReference type="InterPro" id="IPR006913">
    <property type="entry name" value="CENP-V/GFA"/>
</dbReference>
<dbReference type="InterPro" id="IPR011057">
    <property type="entry name" value="Mss4-like_sf"/>
</dbReference>
<dbReference type="PANTHER" id="PTHR33337:SF40">
    <property type="entry name" value="CENP-V_GFA DOMAIN-CONTAINING PROTEIN-RELATED"/>
    <property type="match status" value="1"/>
</dbReference>
<dbReference type="PANTHER" id="PTHR33337">
    <property type="entry name" value="GFA DOMAIN-CONTAINING PROTEIN"/>
    <property type="match status" value="1"/>
</dbReference>
<dbReference type="Pfam" id="PF04828">
    <property type="entry name" value="GFA"/>
    <property type="match status" value="1"/>
</dbReference>
<dbReference type="SUPFAM" id="SSF51316">
    <property type="entry name" value="Mss4-like"/>
    <property type="match status" value="1"/>
</dbReference>
<dbReference type="PROSITE" id="PS51891">
    <property type="entry name" value="CENP_V_GFA"/>
    <property type="match status" value="1"/>
</dbReference>
<feature type="chain" id="PRO_0000372335" description="Uncharacterized lyase C29B12.13">
    <location>
        <begin position="1"/>
        <end position="137"/>
    </location>
</feature>
<feature type="domain" description="CENP-V/GFA" evidence="1">
    <location>
        <begin position="4"/>
        <end position="118"/>
    </location>
</feature>
<feature type="binding site" evidence="1">
    <location>
        <position position="8"/>
    </location>
    <ligand>
        <name>Zn(2+)</name>
        <dbReference type="ChEBI" id="CHEBI:29105"/>
        <label>1</label>
        <note>structural</note>
    </ligand>
</feature>
<feature type="binding site" evidence="1">
    <location>
        <position position="10"/>
    </location>
    <ligand>
        <name>Zn(2+)</name>
        <dbReference type="ChEBI" id="CHEBI:29105"/>
        <label>1</label>
        <note>structural</note>
    </ligand>
</feature>
<feature type="binding site" evidence="1">
    <location>
        <position position="27"/>
    </location>
    <ligand>
        <name>Zn(2+)</name>
        <dbReference type="ChEBI" id="CHEBI:29105"/>
        <label>2</label>
        <note>catalytic</note>
    </ligand>
</feature>
<feature type="binding site" evidence="1">
    <location>
        <position position="29"/>
    </location>
    <ligand>
        <name>Zn(2+)</name>
        <dbReference type="ChEBI" id="CHEBI:29105"/>
        <label>2</label>
        <note>catalytic</note>
    </ligand>
</feature>
<feature type="binding site" evidence="1">
    <location>
        <position position="32"/>
    </location>
    <ligand>
        <name>Zn(2+)</name>
        <dbReference type="ChEBI" id="CHEBI:29105"/>
        <label>2</label>
        <note>catalytic</note>
    </ligand>
</feature>
<feature type="binding site" evidence="1">
    <location>
        <position position="71"/>
    </location>
    <ligand>
        <name>Zn(2+)</name>
        <dbReference type="ChEBI" id="CHEBI:29105"/>
        <label>1</label>
        <note>structural</note>
    </ligand>
</feature>
<feature type="binding site" evidence="1">
    <location>
        <position position="74"/>
    </location>
    <ligand>
        <name>Zn(2+)</name>
        <dbReference type="ChEBI" id="CHEBI:29105"/>
        <label>1</label>
        <note>structural</note>
    </ligand>
</feature>
<accession>O14034</accession>
<protein>
    <recommendedName>
        <fullName>Uncharacterized lyase C29B12.13</fullName>
        <ecNumber>4.-.-.-</ecNumber>
    </recommendedName>
</protein>
<proteinExistence type="inferred from homology"/>
<reference key="1">
    <citation type="journal article" date="2002" name="Nature">
        <title>The genome sequence of Schizosaccharomyces pombe.</title>
        <authorList>
            <person name="Wood V."/>
            <person name="Gwilliam R."/>
            <person name="Rajandream M.A."/>
            <person name="Lyne M.H."/>
            <person name="Lyne R."/>
            <person name="Stewart A."/>
            <person name="Sgouros J.G."/>
            <person name="Peat N."/>
            <person name="Hayles J."/>
            <person name="Baker S.G."/>
            <person name="Basham D."/>
            <person name="Bowman S."/>
            <person name="Brooks K."/>
            <person name="Brown D."/>
            <person name="Brown S."/>
            <person name="Chillingworth T."/>
            <person name="Churcher C.M."/>
            <person name="Collins M."/>
            <person name="Connor R."/>
            <person name="Cronin A."/>
            <person name="Davis P."/>
            <person name="Feltwell T."/>
            <person name="Fraser A."/>
            <person name="Gentles S."/>
            <person name="Goble A."/>
            <person name="Hamlin N."/>
            <person name="Harris D.E."/>
            <person name="Hidalgo J."/>
            <person name="Hodgson G."/>
            <person name="Holroyd S."/>
            <person name="Hornsby T."/>
            <person name="Howarth S."/>
            <person name="Huckle E.J."/>
            <person name="Hunt S."/>
            <person name="Jagels K."/>
            <person name="James K.D."/>
            <person name="Jones L."/>
            <person name="Jones M."/>
            <person name="Leather S."/>
            <person name="McDonald S."/>
            <person name="McLean J."/>
            <person name="Mooney P."/>
            <person name="Moule S."/>
            <person name="Mungall K.L."/>
            <person name="Murphy L.D."/>
            <person name="Niblett D."/>
            <person name="Odell C."/>
            <person name="Oliver K."/>
            <person name="O'Neil S."/>
            <person name="Pearson D."/>
            <person name="Quail M.A."/>
            <person name="Rabbinowitsch E."/>
            <person name="Rutherford K.M."/>
            <person name="Rutter S."/>
            <person name="Saunders D."/>
            <person name="Seeger K."/>
            <person name="Sharp S."/>
            <person name="Skelton J."/>
            <person name="Simmonds M.N."/>
            <person name="Squares R."/>
            <person name="Squares S."/>
            <person name="Stevens K."/>
            <person name="Taylor K."/>
            <person name="Taylor R.G."/>
            <person name="Tivey A."/>
            <person name="Walsh S.V."/>
            <person name="Warren T."/>
            <person name="Whitehead S."/>
            <person name="Woodward J.R."/>
            <person name="Volckaert G."/>
            <person name="Aert R."/>
            <person name="Robben J."/>
            <person name="Grymonprez B."/>
            <person name="Weltjens I."/>
            <person name="Vanstreels E."/>
            <person name="Rieger M."/>
            <person name="Schaefer M."/>
            <person name="Mueller-Auer S."/>
            <person name="Gabel C."/>
            <person name="Fuchs M."/>
            <person name="Duesterhoeft A."/>
            <person name="Fritzc C."/>
            <person name="Holzer E."/>
            <person name="Moestl D."/>
            <person name="Hilbert H."/>
            <person name="Borzym K."/>
            <person name="Langer I."/>
            <person name="Beck A."/>
            <person name="Lehrach H."/>
            <person name="Reinhardt R."/>
            <person name="Pohl T.M."/>
            <person name="Eger P."/>
            <person name="Zimmermann W."/>
            <person name="Wedler H."/>
            <person name="Wambutt R."/>
            <person name="Purnelle B."/>
            <person name="Goffeau A."/>
            <person name="Cadieu E."/>
            <person name="Dreano S."/>
            <person name="Gloux S."/>
            <person name="Lelaure V."/>
            <person name="Mottier S."/>
            <person name="Galibert F."/>
            <person name="Aves S.J."/>
            <person name="Xiang Z."/>
            <person name="Hunt C."/>
            <person name="Moore K."/>
            <person name="Hurst S.M."/>
            <person name="Lucas M."/>
            <person name="Rochet M."/>
            <person name="Gaillardin C."/>
            <person name="Tallada V.A."/>
            <person name="Garzon A."/>
            <person name="Thode G."/>
            <person name="Daga R.R."/>
            <person name="Cruzado L."/>
            <person name="Jimenez J."/>
            <person name="Sanchez M."/>
            <person name="del Rey F."/>
            <person name="Benito J."/>
            <person name="Dominguez A."/>
            <person name="Revuelta J.L."/>
            <person name="Moreno S."/>
            <person name="Armstrong J."/>
            <person name="Forsburg S.L."/>
            <person name="Cerutti L."/>
            <person name="Lowe T."/>
            <person name="McCombie W.R."/>
            <person name="Paulsen I."/>
            <person name="Potashkin J."/>
            <person name="Shpakovski G.V."/>
            <person name="Ussery D."/>
            <person name="Barrell B.G."/>
            <person name="Nurse P."/>
        </authorList>
    </citation>
    <scope>NUCLEOTIDE SEQUENCE [LARGE SCALE GENOMIC DNA]</scope>
    <source>
        <strain>972 / ATCC 24843</strain>
    </source>
</reference>
<reference key="2">
    <citation type="journal article" date="2006" name="Nat. Biotechnol.">
        <title>ORFeome cloning and global analysis of protein localization in the fission yeast Schizosaccharomyces pombe.</title>
        <authorList>
            <person name="Matsuyama A."/>
            <person name="Arai R."/>
            <person name="Yashiroda Y."/>
            <person name="Shirai A."/>
            <person name="Kamata A."/>
            <person name="Sekido S."/>
            <person name="Kobayashi Y."/>
            <person name="Hashimoto A."/>
            <person name="Hamamoto M."/>
            <person name="Hiraoka Y."/>
            <person name="Horinouchi S."/>
            <person name="Yoshida M."/>
        </authorList>
    </citation>
    <scope>SUBCELLULAR LOCATION [LARGE SCALE ANALYSIS]</scope>
</reference>
<gene>
    <name type="ORF">SPAC29B12.13</name>
</gene>
<organism>
    <name type="scientific">Schizosaccharomyces pombe (strain 972 / ATCC 24843)</name>
    <name type="common">Fission yeast</name>
    <dbReference type="NCBI Taxonomy" id="284812"/>
    <lineage>
        <taxon>Eukaryota</taxon>
        <taxon>Fungi</taxon>
        <taxon>Dikarya</taxon>
        <taxon>Ascomycota</taxon>
        <taxon>Taphrinomycotina</taxon>
        <taxon>Schizosaccharomycetes</taxon>
        <taxon>Schizosaccharomycetales</taxon>
        <taxon>Schizosaccharomycetaceae</taxon>
        <taxon>Schizosaccharomyces</taxon>
    </lineage>
</organism>
<name>YEMD_SCHPO</name>
<comment type="cofactor">
    <cofactor evidence="1">
        <name>Zn(2+)</name>
        <dbReference type="ChEBI" id="CHEBI:29105"/>
    </cofactor>
    <text evidence="1">Binds 2 Zn(2+) ions per subunit.</text>
</comment>
<comment type="subcellular location">
    <subcellularLocation>
        <location evidence="2">Cytoplasm</location>
    </subcellularLocation>
    <subcellularLocation>
        <location evidence="2">Nucleus</location>
    </subcellularLocation>
</comment>
<comment type="similarity">
    <text evidence="3">Belongs to the Gfa family.</text>
</comment>
<evidence type="ECO:0000255" key="1">
    <source>
        <dbReference type="PROSITE-ProRule" id="PRU01239"/>
    </source>
</evidence>
<evidence type="ECO:0000269" key="2">
    <source>
    </source>
</evidence>
<evidence type="ECO:0000305" key="3"/>
<keyword id="KW-0963">Cytoplasm</keyword>
<keyword id="KW-0456">Lyase</keyword>
<keyword id="KW-0479">Metal-binding</keyword>
<keyword id="KW-0539">Nucleus</keyword>
<keyword id="KW-1185">Reference proteome</keyword>
<keyword id="KW-0862">Zinc</keyword>